<dbReference type="EMBL" id="AP009372">
    <property type="protein sequence ID" value="BAF50347.1"/>
    <property type="molecule type" value="Genomic_DNA"/>
</dbReference>
<dbReference type="EMBL" id="AP009372">
    <property type="protein sequence ID" value="BAF50335.1"/>
    <property type="molecule type" value="Genomic_DNA"/>
</dbReference>
<dbReference type="GO" id="GO:0009706">
    <property type="term" value="C:chloroplast inner membrane"/>
    <property type="evidence" value="ECO:0007669"/>
    <property type="project" value="UniProtKB-SubCell"/>
</dbReference>
<dbReference type="GO" id="GO:0015031">
    <property type="term" value="P:protein transport"/>
    <property type="evidence" value="ECO:0007669"/>
    <property type="project" value="UniProtKB-KW"/>
</dbReference>
<dbReference type="InterPro" id="IPR008896">
    <property type="entry name" value="TIC214"/>
</dbReference>
<dbReference type="PANTHER" id="PTHR33163:SF40">
    <property type="entry name" value="PROTEIN TIC 214"/>
    <property type="match status" value="1"/>
</dbReference>
<dbReference type="PANTHER" id="PTHR33163">
    <property type="entry name" value="PROTEIN TIC 214-RELATED"/>
    <property type="match status" value="1"/>
</dbReference>
<dbReference type="Pfam" id="PF05758">
    <property type="entry name" value="Ycf1"/>
    <property type="match status" value="1"/>
</dbReference>
<geneLocation type="chloroplast"/>
<proteinExistence type="inferred from homology"/>
<name>TI214_CRUWA</name>
<organism>
    <name type="scientific">Crucihimalaya wallichii</name>
    <name type="common">Rock-cress</name>
    <name type="synonym">Arabidopsis campestris</name>
    <dbReference type="NCBI Taxonomy" id="78192"/>
    <lineage>
        <taxon>Eukaryota</taxon>
        <taxon>Viridiplantae</taxon>
        <taxon>Streptophyta</taxon>
        <taxon>Embryophyta</taxon>
        <taxon>Tracheophyta</taxon>
        <taxon>Spermatophyta</taxon>
        <taxon>Magnoliopsida</taxon>
        <taxon>eudicotyledons</taxon>
        <taxon>Gunneridae</taxon>
        <taxon>Pentapetalae</taxon>
        <taxon>rosids</taxon>
        <taxon>malvids</taxon>
        <taxon>Brassicales</taxon>
        <taxon>Brassicaceae</taxon>
        <taxon>Crucihimalayeae</taxon>
        <taxon>Crucihimalaya</taxon>
    </lineage>
</organism>
<sequence length="1795" mass="214567">MMVFQSFILGNLVSLCMKIINSVVVVGLYYGFLTTFSIGPSYLFLLRARVMDEGEEGTEKKVSATTGFIAGQLMMFISIYYAPLHLALGRPHTITVLALPYLLFHFFWNNHKHFFDYGSTTRNEMRNLRIQCVFLNNLIFQLFNHFILPSSMLARLVNIYMFRCNNKMLFVTSSFVGWLIGHILFMKWVGLVLVWIQQNNSIRSNVLIRSNKYKFLVSELRNSMARIFSILLFITCVYYLGRIPSPIFTKKLKGTSETGGTKQDQEVSTEEAPFPSLFSEEGEDLDKIDEMEEIRVNGKDKINKDDEFHVRTYYNYKTVSENVDGNKENSNLEFFKIKKKEDHFLWFEKPFVTLVFDYKRWNRPNRYIKNDKIENTVRNEMSQYFFYTCQSDGKERISFTYPPTLSTFFEMIKKKIPSFTREKTPSDPISTYWSLINEEKKENLKKEFLNRIEALDKEWSVENILEKTTRFCHNEAKKEYLPKIYDPFLHGISRGRIKKLPPFQIITQTYRKNNIGASWINKIHGLLLKINYHKFEQTIEKFNSKSLSIEKKLSFFSEPQQEEKIDSEEEIKIFKFLFDVVRTHSNDQTRIKNFIDFYEINKKVPRWSYKLISELEELEGENEENVPMEPGIRSRKAKRVVIFTDKEPHNEIYTNLKDNQNSDQKDEMALIRYSQQSDFRREIIKGSMRSQRRKSIIWEFFQAKVHSPLFFDRKDKLFFFSFDIWGLKKKILRNFMWKNKKKKIDKKEEEQSKIEEKRRIEIAETWDSFLFAQIIRGSLLVTQSILRKYIILPLLIIIKNSVRMLLFQFPEWSEDLKDWKREMHIKCTYNGVQLSETEFPKNWLTDGIQIKILFPFYLKPWHKSKFQASQKVRLKKTKDKGEKNDFCFLTVWGMETELPFGSAQKKPSFVEPISKELKKRIKKFKTKPFLVLRIFKKRATILLKVTKEMKNWTLKNFLFIKGKIKDLSKQNLIPLFGPSEIYELNETKKDSIISNQIIHQLSVQNKSMEWTNSSLSEKKKKNLIDRIKTIRNKIDEISKEKQNLTNSCTKLRYDSKIIESSKKIWQTFKRKNTRLIRKSIFFIKFCIEQLSIAIFLGIINIQRITTQLFFESTKIILDKYIYKNDEIGEKKNKKNTIYFISTIKNLISNKKKISYDLCSLSQAYVFYKLSQIKISNFSKLKAVLEYNICITSFFVKNQIKVFFQEQGIFQYELKNKTFLNSEVNQWKNWLRSHYQYNLPQIAWARLVTEKWKKKITQDSLVLNPSLTKEDSYEKKIVDNYKKQNFFEANSLVTPKHNLKKDSIYNIFCYKSIHCTEKNVDMSISIALDNCLVSSFLEKYNIRGIGEIQYRKYLDWRILNFWFTKKVNIEPWVDTKSKQKYINTKVQNYQRIDKITKTGLANQKRNFFDWMGMNEEILNHRITNFEFVFFPEFVLFSSTYKMKPWVIPIKLLLLNFNENINVNKKITRKKKGFIQSNEKKSRRFYNLNKDEKESTGQVEFESDKEQQRNSESALSNQEKNIEENYAESTIKKRKNKKQYKSNTEAELDLFLTRYSRFQLRWNCFFNQKILDNVKVYCLLVRLKNPNEIAISSIERGEMSLDILMIEKNFTFAKLMKKGILIIEPVRLSVQNDGQLIIYRTIGISLVHKNKNKDKISKRYKKKSYIDKKKIDKSITKYQNKTVNRKKNNYDFFVPENILSPKRRREFRILICFNFKKKTARDRNSRFDKNIQNLPTVLHKKKDLDKDKKNLINLKSFLWPNFRLEDLACMNRYWFNTTNGNHFSMIRIHMYTRFPIH</sequence>
<gene>
    <name evidence="1" type="primary">TIC214</name>
    <name type="synonym">ycf1-A</name>
</gene>
<gene>
    <name evidence="1" type="primary">TIC214</name>
    <name type="synonym">ycf1-B</name>
</gene>
<protein>
    <recommendedName>
        <fullName evidence="1">Protein TIC 214</fullName>
    </recommendedName>
    <alternativeName>
        <fullName evidence="1">Translocon at the inner envelope membrane of chloroplasts 214</fullName>
        <shortName evidence="1">AtTIC214</shortName>
    </alternativeName>
</protein>
<keyword id="KW-0150">Chloroplast</keyword>
<keyword id="KW-0472">Membrane</keyword>
<keyword id="KW-0934">Plastid</keyword>
<keyword id="KW-1001">Plastid inner membrane</keyword>
<keyword id="KW-0653">Protein transport</keyword>
<keyword id="KW-0812">Transmembrane</keyword>
<keyword id="KW-1133">Transmembrane helix</keyword>
<keyword id="KW-0813">Transport</keyword>
<evidence type="ECO:0000250" key="1">
    <source>
        <dbReference type="UniProtKB" id="P56785"/>
    </source>
</evidence>
<evidence type="ECO:0000255" key="2"/>
<evidence type="ECO:0000256" key="3">
    <source>
        <dbReference type="SAM" id="MobiDB-lite"/>
    </source>
</evidence>
<evidence type="ECO:0000305" key="4"/>
<comment type="function">
    <text evidence="1">Involved in protein precursor import into chloroplasts. May be part of an intermediate translocation complex acting as a protein-conducting channel at the inner envelope.</text>
</comment>
<comment type="subunit">
    <text evidence="1">Part of the Tic complex.</text>
</comment>
<comment type="subcellular location">
    <subcellularLocation>
        <location evidence="1">Plastid</location>
        <location evidence="1">Chloroplast inner membrane</location>
        <topology evidence="2">Multi-pass membrane protein</topology>
    </subcellularLocation>
</comment>
<comment type="miscellaneous">
    <text>There is a partial copy of the N-terminus (positions 1-343) of ycf1 in the inverted repeat (BAF50335).</text>
</comment>
<comment type="similarity">
    <text evidence="4">Belongs to the TIC214 family.</text>
</comment>
<reference key="1">
    <citation type="submission" date="2007-03" db="EMBL/GenBank/DDBJ databases">
        <title>Sequencing analysis of Crucihimalaya wallichii chloroplast DNA.</title>
        <authorList>
            <person name="Hosouchi T."/>
            <person name="Tsuruoka H."/>
            <person name="Kotani H."/>
        </authorList>
    </citation>
    <scope>NUCLEOTIDE SEQUENCE [LARGE SCALE GENOMIC DNA]</scope>
</reference>
<accession>A4QKZ2</accession>
<accession>A4QKY0</accession>
<feature type="chain" id="PRO_0000326568" description="Protein TIC 214">
    <location>
        <begin position="1"/>
        <end position="1795"/>
    </location>
</feature>
<feature type="transmembrane region" description="Helical" evidence="2">
    <location>
        <begin position="19"/>
        <end position="39"/>
    </location>
</feature>
<feature type="transmembrane region" description="Helical" evidence="2">
    <location>
        <begin position="68"/>
        <end position="88"/>
    </location>
</feature>
<feature type="transmembrane region" description="Helical" evidence="2">
    <location>
        <begin position="91"/>
        <end position="111"/>
    </location>
</feature>
<feature type="transmembrane region" description="Helical" evidence="2">
    <location>
        <begin position="133"/>
        <end position="153"/>
    </location>
</feature>
<feature type="transmembrane region" description="Helical" evidence="2">
    <location>
        <begin position="176"/>
        <end position="196"/>
    </location>
</feature>
<feature type="transmembrane region" description="Helical" evidence="2">
    <location>
        <begin position="227"/>
        <end position="247"/>
    </location>
</feature>
<feature type="region of interest" description="Disordered" evidence="3">
    <location>
        <begin position="1490"/>
        <end position="1517"/>
    </location>
</feature>
<feature type="compositionally biased region" description="Polar residues" evidence="3">
    <location>
        <begin position="1508"/>
        <end position="1517"/>
    </location>
</feature>